<accession>Q1CM28</accession>
<accession>C4GPI4</accession>
<feature type="chain" id="PRO_1000046788" description="UPF0306 protein YPN_0620">
    <location>
        <begin position="1"/>
        <end position="147"/>
    </location>
</feature>
<protein>
    <recommendedName>
        <fullName evidence="1">UPF0306 protein YPN_0620</fullName>
    </recommendedName>
</protein>
<reference key="1">
    <citation type="journal article" date="2006" name="J. Bacteriol.">
        <title>Complete genome sequence of Yersinia pestis strains Antiqua and Nepal516: evidence of gene reduction in an emerging pathogen.</title>
        <authorList>
            <person name="Chain P.S.G."/>
            <person name="Hu P."/>
            <person name="Malfatti S.A."/>
            <person name="Radnedge L."/>
            <person name="Larimer F."/>
            <person name="Vergez L.M."/>
            <person name="Worsham P."/>
            <person name="Chu M.C."/>
            <person name="Andersen G.L."/>
        </authorList>
    </citation>
    <scope>NUCLEOTIDE SEQUENCE [LARGE SCALE GENOMIC DNA]</scope>
    <source>
        <strain>Nepal516</strain>
    </source>
</reference>
<reference key="2">
    <citation type="submission" date="2009-04" db="EMBL/GenBank/DDBJ databases">
        <title>Yersinia pestis Nepal516A whole genome shotgun sequencing project.</title>
        <authorList>
            <person name="Plunkett G. III"/>
            <person name="Anderson B.D."/>
            <person name="Baumler D.J."/>
            <person name="Burland V."/>
            <person name="Cabot E.L."/>
            <person name="Glasner J.D."/>
            <person name="Mau B."/>
            <person name="Neeno-Eckwall E."/>
            <person name="Perna N.T."/>
            <person name="Munk A.C."/>
            <person name="Tapia R."/>
            <person name="Green L.D."/>
            <person name="Rogers Y.C."/>
            <person name="Detter J.C."/>
            <person name="Bruce D.C."/>
            <person name="Brettin T.S."/>
        </authorList>
    </citation>
    <scope>NUCLEOTIDE SEQUENCE [LARGE SCALE GENOMIC DNA]</scope>
    <source>
        <strain>Nepal516</strain>
    </source>
</reference>
<sequence length="147" mass="16712">MNNPDDVLLINRFLRQQHVLTLCAGSGMDMWCASCFYVFDENQMALFLMTEKHTRHSELMLINPQVAGTVATQSRTIALIKGIQYRGEISLLSGDAEQAARNRYCRRFPVAKVSSAPLWQLNLLEIKMTNNALGFGKKLHWSRVEPL</sequence>
<organism>
    <name type="scientific">Yersinia pestis bv. Antiqua (strain Nepal516)</name>
    <dbReference type="NCBI Taxonomy" id="377628"/>
    <lineage>
        <taxon>Bacteria</taxon>
        <taxon>Pseudomonadati</taxon>
        <taxon>Pseudomonadota</taxon>
        <taxon>Gammaproteobacteria</taxon>
        <taxon>Enterobacterales</taxon>
        <taxon>Yersiniaceae</taxon>
        <taxon>Yersinia</taxon>
    </lineage>
</organism>
<dbReference type="EMBL" id="CP000305">
    <property type="protein sequence ID" value="ABG16952.1"/>
    <property type="molecule type" value="Genomic_DNA"/>
</dbReference>
<dbReference type="EMBL" id="ACNQ01000006">
    <property type="protein sequence ID" value="EEO78416.1"/>
    <property type="molecule type" value="Genomic_DNA"/>
</dbReference>
<dbReference type="RefSeq" id="WP_002209282.1">
    <property type="nucleotide sequence ID" value="NZ_ACNQ01000006.1"/>
</dbReference>
<dbReference type="SMR" id="Q1CM28"/>
<dbReference type="KEGG" id="ypn:YPN_0620"/>
<dbReference type="HOGENOM" id="CLU_105087_3_0_6"/>
<dbReference type="Proteomes" id="UP000008936">
    <property type="component" value="Chromosome"/>
</dbReference>
<dbReference type="Gene3D" id="2.30.110.10">
    <property type="entry name" value="Electron Transport, Fmn-binding Protein, Chain A"/>
    <property type="match status" value="1"/>
</dbReference>
<dbReference type="HAMAP" id="MF_00764">
    <property type="entry name" value="UPF0306"/>
    <property type="match status" value="1"/>
</dbReference>
<dbReference type="InterPro" id="IPR012349">
    <property type="entry name" value="Split_barrel_FMN-bd"/>
</dbReference>
<dbReference type="InterPro" id="IPR011194">
    <property type="entry name" value="UPF0306"/>
</dbReference>
<dbReference type="NCBIfam" id="NF002900">
    <property type="entry name" value="PRK03467.1"/>
    <property type="match status" value="1"/>
</dbReference>
<dbReference type="PIRSF" id="PIRSF009554">
    <property type="entry name" value="UCP009554"/>
    <property type="match status" value="1"/>
</dbReference>
<dbReference type="SUPFAM" id="SSF50475">
    <property type="entry name" value="FMN-binding split barrel"/>
    <property type="match status" value="1"/>
</dbReference>
<name>Y620_YERPN</name>
<gene>
    <name type="ordered locus">YPN_0620</name>
    <name type="ORF">YP516_0653</name>
</gene>
<proteinExistence type="inferred from homology"/>
<comment type="similarity">
    <text evidence="1">Belongs to the UPF0306 family.</text>
</comment>
<evidence type="ECO:0000255" key="1">
    <source>
        <dbReference type="HAMAP-Rule" id="MF_00764"/>
    </source>
</evidence>